<name>UVRC_STRPM</name>
<evidence type="ECO:0000255" key="1">
    <source>
        <dbReference type="HAMAP-Rule" id="MF_00203"/>
    </source>
</evidence>
<sequence length="598" mass="68904">MNELIKHKLELLPDSPGCYLHKDKEGTIIYVGKAKNLKKRVRSYFRGSHDTKTELLVSEIVDFEYIVTESDTEALLLEINLIQKNMPKYNIKLKDDKSYPFLKITNESFPRLVITRYIKKNDGLYFGPYPDSYTANEVKKLLDRIFPFKKCKNPINKVCFYYHLGQCCAHTICHTDKAYWDRLIDDVKHFLNGKDDKIIEDLRSKMLAASEEMAFERAAEYRDLISGIATMRTKQRVMSKDLQDRDIFGYYVDKGWMCVQVFFVRQGKLIQRDVNLFPYYNDAEEDFLTYMGQFYQDKQHFIPKEVFIPEAIDEELVAAIVPTKIIKPKRGEKKQLVALATKNARVSLQQKFDLLEKDIKKTSGAIENLGQLLKIDKPVRIEAFDNSNIQGTSPVAAMVVFVDGKPSKKDYRKFKIKTVVGPDDYASMREVLFRRYSRVKKEGLQAPNLIIVDGGVGQVNVAKDVIEKQLGLTIPVAGLQKNDKHQTHDLLFGNPLEVVPLPRRSEEFFLLHRIQDEVHRFAVTFHRQVRRKNSFSSTLDHISGLGPKRKQLLLRHFKTITAIASATSEEIQALGIPKTVVEAIQQQITDNKNDRSSP</sequence>
<accession>Q48TS8</accession>
<reference key="1">
    <citation type="journal article" date="2005" name="J. Infect. Dis.">
        <title>Genome sequence of a serotype M28 strain of group A Streptococcus: potential new insights into puerperal sepsis and bacterial disease specificity.</title>
        <authorList>
            <person name="Green N.M."/>
            <person name="Zhang S."/>
            <person name="Porcella S.F."/>
            <person name="Nagiec M.J."/>
            <person name="Barbian K.D."/>
            <person name="Beres S.B."/>
            <person name="Lefebvre R.B."/>
            <person name="Musser J.M."/>
        </authorList>
    </citation>
    <scope>NUCLEOTIDE SEQUENCE [LARGE SCALE GENOMIC DNA]</scope>
    <source>
        <strain>MGAS6180</strain>
    </source>
</reference>
<comment type="function">
    <text evidence="1">The UvrABC repair system catalyzes the recognition and processing of DNA lesions. UvrC both incises the 5' and 3' sides of the lesion. The N-terminal half is responsible for the 3' incision and the C-terminal half is responsible for the 5' incision.</text>
</comment>
<comment type="subunit">
    <text evidence="1">Interacts with UvrB in an incision complex.</text>
</comment>
<comment type="subcellular location">
    <subcellularLocation>
        <location evidence="1">Cytoplasm</location>
    </subcellularLocation>
</comment>
<comment type="similarity">
    <text evidence="1">Belongs to the UvrC family.</text>
</comment>
<keyword id="KW-0963">Cytoplasm</keyword>
<keyword id="KW-0227">DNA damage</keyword>
<keyword id="KW-0228">DNA excision</keyword>
<keyword id="KW-0234">DNA repair</keyword>
<keyword id="KW-0267">Excision nuclease</keyword>
<keyword id="KW-0742">SOS response</keyword>
<proteinExistence type="inferred from homology"/>
<feature type="chain" id="PRO_0000227479" description="UvrABC system protein C">
    <location>
        <begin position="1"/>
        <end position="598"/>
    </location>
</feature>
<feature type="domain" description="GIY-YIG" evidence="1">
    <location>
        <begin position="14"/>
        <end position="91"/>
    </location>
</feature>
<feature type="domain" description="UVR" evidence="1">
    <location>
        <begin position="196"/>
        <end position="231"/>
    </location>
</feature>
<organism>
    <name type="scientific">Streptococcus pyogenes serotype M28 (strain MGAS6180)</name>
    <dbReference type="NCBI Taxonomy" id="319701"/>
    <lineage>
        <taxon>Bacteria</taxon>
        <taxon>Bacillati</taxon>
        <taxon>Bacillota</taxon>
        <taxon>Bacilli</taxon>
        <taxon>Lactobacillales</taxon>
        <taxon>Streptococcaceae</taxon>
        <taxon>Streptococcus</taxon>
    </lineage>
</organism>
<protein>
    <recommendedName>
        <fullName evidence="1">UvrABC system protein C</fullName>
        <shortName evidence="1">Protein UvrC</shortName>
    </recommendedName>
    <alternativeName>
        <fullName evidence="1">Excinuclease ABC subunit C</fullName>
    </alternativeName>
</protein>
<dbReference type="EMBL" id="CP000056">
    <property type="protein sequence ID" value="AAX71878.1"/>
    <property type="molecule type" value="Genomic_DNA"/>
</dbReference>
<dbReference type="RefSeq" id="WP_011284753.1">
    <property type="nucleotide sequence ID" value="NC_007296.2"/>
</dbReference>
<dbReference type="SMR" id="Q48TS8"/>
<dbReference type="KEGG" id="spb:M28_Spy0765"/>
<dbReference type="HOGENOM" id="CLU_014841_3_2_9"/>
<dbReference type="GO" id="GO:0005737">
    <property type="term" value="C:cytoplasm"/>
    <property type="evidence" value="ECO:0007669"/>
    <property type="project" value="UniProtKB-SubCell"/>
</dbReference>
<dbReference type="GO" id="GO:0009380">
    <property type="term" value="C:excinuclease repair complex"/>
    <property type="evidence" value="ECO:0007669"/>
    <property type="project" value="InterPro"/>
</dbReference>
<dbReference type="GO" id="GO:0003677">
    <property type="term" value="F:DNA binding"/>
    <property type="evidence" value="ECO:0007669"/>
    <property type="project" value="UniProtKB-UniRule"/>
</dbReference>
<dbReference type="GO" id="GO:0009381">
    <property type="term" value="F:excinuclease ABC activity"/>
    <property type="evidence" value="ECO:0007669"/>
    <property type="project" value="UniProtKB-UniRule"/>
</dbReference>
<dbReference type="GO" id="GO:0006289">
    <property type="term" value="P:nucleotide-excision repair"/>
    <property type="evidence" value="ECO:0007669"/>
    <property type="project" value="UniProtKB-UniRule"/>
</dbReference>
<dbReference type="GO" id="GO:0009432">
    <property type="term" value="P:SOS response"/>
    <property type="evidence" value="ECO:0007669"/>
    <property type="project" value="UniProtKB-UniRule"/>
</dbReference>
<dbReference type="CDD" id="cd10434">
    <property type="entry name" value="GIY-YIG_UvrC_Cho"/>
    <property type="match status" value="1"/>
</dbReference>
<dbReference type="FunFam" id="3.30.420.340:FF:000002">
    <property type="entry name" value="UvrABC system protein C"/>
    <property type="match status" value="1"/>
</dbReference>
<dbReference type="FunFam" id="3.40.1440.10:FF:000001">
    <property type="entry name" value="UvrABC system protein C"/>
    <property type="match status" value="1"/>
</dbReference>
<dbReference type="Gene3D" id="1.10.150.20">
    <property type="entry name" value="5' to 3' exonuclease, C-terminal subdomain"/>
    <property type="match status" value="1"/>
</dbReference>
<dbReference type="Gene3D" id="3.40.1440.10">
    <property type="entry name" value="GIY-YIG endonuclease"/>
    <property type="match status" value="1"/>
</dbReference>
<dbReference type="Gene3D" id="4.10.860.10">
    <property type="entry name" value="UVR domain"/>
    <property type="match status" value="1"/>
</dbReference>
<dbReference type="Gene3D" id="3.30.420.340">
    <property type="entry name" value="UvrC, RNAse H endonuclease domain"/>
    <property type="match status" value="1"/>
</dbReference>
<dbReference type="HAMAP" id="MF_00203">
    <property type="entry name" value="UvrC"/>
    <property type="match status" value="1"/>
</dbReference>
<dbReference type="InterPro" id="IPR000305">
    <property type="entry name" value="GIY-YIG_endonuc"/>
</dbReference>
<dbReference type="InterPro" id="IPR035901">
    <property type="entry name" value="GIY-YIG_endonuc_sf"/>
</dbReference>
<dbReference type="InterPro" id="IPR047296">
    <property type="entry name" value="GIY-YIG_UvrC_Cho"/>
</dbReference>
<dbReference type="InterPro" id="IPR010994">
    <property type="entry name" value="RuvA_2-like"/>
</dbReference>
<dbReference type="InterPro" id="IPR001943">
    <property type="entry name" value="UVR_dom"/>
</dbReference>
<dbReference type="InterPro" id="IPR036876">
    <property type="entry name" value="UVR_dom_sf"/>
</dbReference>
<dbReference type="InterPro" id="IPR050066">
    <property type="entry name" value="UvrABC_protein_C"/>
</dbReference>
<dbReference type="InterPro" id="IPR004791">
    <property type="entry name" value="UvrC"/>
</dbReference>
<dbReference type="InterPro" id="IPR001162">
    <property type="entry name" value="UvrC_RNase_H_dom"/>
</dbReference>
<dbReference type="InterPro" id="IPR038476">
    <property type="entry name" value="UvrC_RNase_H_dom_sf"/>
</dbReference>
<dbReference type="NCBIfam" id="TIGR00194">
    <property type="entry name" value="uvrC"/>
    <property type="match status" value="1"/>
</dbReference>
<dbReference type="PANTHER" id="PTHR30562:SF1">
    <property type="entry name" value="UVRABC SYSTEM PROTEIN C"/>
    <property type="match status" value="1"/>
</dbReference>
<dbReference type="PANTHER" id="PTHR30562">
    <property type="entry name" value="UVRC/OXIDOREDUCTASE"/>
    <property type="match status" value="1"/>
</dbReference>
<dbReference type="Pfam" id="PF01541">
    <property type="entry name" value="GIY-YIG"/>
    <property type="match status" value="1"/>
</dbReference>
<dbReference type="Pfam" id="PF14520">
    <property type="entry name" value="HHH_5"/>
    <property type="match status" value="1"/>
</dbReference>
<dbReference type="Pfam" id="PF02151">
    <property type="entry name" value="UVR"/>
    <property type="match status" value="1"/>
</dbReference>
<dbReference type="Pfam" id="PF22920">
    <property type="entry name" value="UvrC_RNaseH"/>
    <property type="match status" value="1"/>
</dbReference>
<dbReference type="Pfam" id="PF08459">
    <property type="entry name" value="UvrC_RNaseH_dom"/>
    <property type="match status" value="1"/>
</dbReference>
<dbReference type="SMART" id="SM00465">
    <property type="entry name" value="GIYc"/>
    <property type="match status" value="1"/>
</dbReference>
<dbReference type="SUPFAM" id="SSF46600">
    <property type="entry name" value="C-terminal UvrC-binding domain of UvrB"/>
    <property type="match status" value="1"/>
</dbReference>
<dbReference type="SUPFAM" id="SSF82771">
    <property type="entry name" value="GIY-YIG endonuclease"/>
    <property type="match status" value="1"/>
</dbReference>
<dbReference type="SUPFAM" id="SSF47781">
    <property type="entry name" value="RuvA domain 2-like"/>
    <property type="match status" value="1"/>
</dbReference>
<dbReference type="PROSITE" id="PS50164">
    <property type="entry name" value="GIY_YIG"/>
    <property type="match status" value="1"/>
</dbReference>
<dbReference type="PROSITE" id="PS50151">
    <property type="entry name" value="UVR"/>
    <property type="match status" value="1"/>
</dbReference>
<dbReference type="PROSITE" id="PS50165">
    <property type="entry name" value="UVRC"/>
    <property type="match status" value="1"/>
</dbReference>
<gene>
    <name evidence="1" type="primary">uvrC</name>
    <name type="ordered locus">M28_Spy0765</name>
</gene>